<dbReference type="EMBL" id="X64735">
    <property type="protein sequence ID" value="CAA46001.1"/>
    <property type="molecule type" value="mRNA"/>
</dbReference>
<dbReference type="EMBL" id="AE013599">
    <property type="protein sequence ID" value="AAF58933.1"/>
    <property type="molecule type" value="Genomic_DNA"/>
</dbReference>
<dbReference type="EMBL" id="BT003204">
    <property type="protein sequence ID" value="AAO24959.1"/>
    <property type="molecule type" value="mRNA"/>
</dbReference>
<dbReference type="PIR" id="S24559">
    <property type="entry name" value="S24559"/>
</dbReference>
<dbReference type="RefSeq" id="NP_476810.1">
    <property type="nucleotide sequence ID" value="NM_057462.5"/>
</dbReference>
<dbReference type="SMR" id="P28465"/>
<dbReference type="BioGRID" id="61806">
    <property type="interactions" value="10"/>
</dbReference>
<dbReference type="FunCoup" id="P28465">
    <property type="interactions" value="20"/>
</dbReference>
<dbReference type="IntAct" id="P28465">
    <property type="interactions" value="2"/>
</dbReference>
<dbReference type="STRING" id="7227.FBpp0087596"/>
<dbReference type="GlyCosmos" id="P28465">
    <property type="glycosylation" value="2 sites, No reported glycans"/>
</dbReference>
<dbReference type="GlyGen" id="P28465">
    <property type="glycosylation" value="3 sites"/>
</dbReference>
<dbReference type="PaxDb" id="7227-FBpp0087596"/>
<dbReference type="EnsemblMetazoa" id="FBtr0088512">
    <property type="protein sequence ID" value="FBpp0087596"/>
    <property type="gene ID" value="FBgn0004360"/>
</dbReference>
<dbReference type="GeneID" id="35975"/>
<dbReference type="KEGG" id="dme:Dmel_CG1916"/>
<dbReference type="AGR" id="FB:FBgn0004360"/>
<dbReference type="CTD" id="7472"/>
<dbReference type="FlyBase" id="FBgn0004360">
    <property type="gene designation" value="Wnt2"/>
</dbReference>
<dbReference type="VEuPathDB" id="VectorBase:FBgn0004360"/>
<dbReference type="eggNOG" id="KOG3913">
    <property type="taxonomic scope" value="Eukaryota"/>
</dbReference>
<dbReference type="GeneTree" id="ENSGT00940000167538"/>
<dbReference type="InParanoid" id="P28465"/>
<dbReference type="OMA" id="QGYNDQE"/>
<dbReference type="OrthoDB" id="5945655at2759"/>
<dbReference type="PhylomeDB" id="P28465"/>
<dbReference type="Reactome" id="R-DME-3238698">
    <property type="pathway name" value="WNT ligand biogenesis and trafficking"/>
</dbReference>
<dbReference type="SignaLink" id="P28465"/>
<dbReference type="BioGRID-ORCS" id="35975">
    <property type="hits" value="0 hits in 3 CRISPR screens"/>
</dbReference>
<dbReference type="GenomeRNAi" id="35975"/>
<dbReference type="PRO" id="PR:P28465"/>
<dbReference type="Proteomes" id="UP000000803">
    <property type="component" value="Chromosome 2R"/>
</dbReference>
<dbReference type="Bgee" id="FBgn0004360">
    <property type="expression patterns" value="Expressed in head cyst cell (Drosophila) in testis and 25 other cell types or tissues"/>
</dbReference>
<dbReference type="ExpressionAtlas" id="P28465">
    <property type="expression patterns" value="baseline and differential"/>
</dbReference>
<dbReference type="GO" id="GO:0005576">
    <property type="term" value="C:extracellular region"/>
    <property type="evidence" value="ECO:0000250"/>
    <property type="project" value="FlyBase"/>
</dbReference>
<dbReference type="GO" id="GO:0005615">
    <property type="term" value="C:extracellular space"/>
    <property type="evidence" value="ECO:0000318"/>
    <property type="project" value="GO_Central"/>
</dbReference>
<dbReference type="GO" id="GO:0005125">
    <property type="term" value="F:cytokine activity"/>
    <property type="evidence" value="ECO:0000318"/>
    <property type="project" value="GO_Central"/>
</dbReference>
<dbReference type="GO" id="GO:0005109">
    <property type="term" value="F:frizzled binding"/>
    <property type="evidence" value="ECO:0000353"/>
    <property type="project" value="FlyBase"/>
</dbReference>
<dbReference type="GO" id="GO:0005102">
    <property type="term" value="F:signaling receptor binding"/>
    <property type="evidence" value="ECO:0000250"/>
    <property type="project" value="FlyBase"/>
</dbReference>
<dbReference type="GO" id="GO:0048675">
    <property type="term" value="P:axon extension"/>
    <property type="evidence" value="ECO:0000315"/>
    <property type="project" value="FlyBase"/>
</dbReference>
<dbReference type="GO" id="GO:0060070">
    <property type="term" value="P:canonical Wnt signaling pathway"/>
    <property type="evidence" value="ECO:0000315"/>
    <property type="project" value="FlyBase"/>
</dbReference>
<dbReference type="GO" id="GO:0045165">
    <property type="term" value="P:cell fate commitment"/>
    <property type="evidence" value="ECO:0000318"/>
    <property type="project" value="GO_Central"/>
</dbReference>
<dbReference type="GO" id="GO:0060250">
    <property type="term" value="P:germ-line stem-cell niche homeostasis"/>
    <property type="evidence" value="ECO:0000315"/>
    <property type="project" value="FlyBase"/>
</dbReference>
<dbReference type="GO" id="GO:0007517">
    <property type="term" value="P:muscle organ development"/>
    <property type="evidence" value="ECO:0000315"/>
    <property type="project" value="FlyBase"/>
</dbReference>
<dbReference type="GO" id="GO:0030182">
    <property type="term" value="P:neuron differentiation"/>
    <property type="evidence" value="ECO:0000318"/>
    <property type="project" value="GO_Central"/>
</dbReference>
<dbReference type="GO" id="GO:0007424">
    <property type="term" value="P:open tracheal system development"/>
    <property type="evidence" value="ECO:0000316"/>
    <property type="project" value="FlyBase"/>
</dbReference>
<dbReference type="GO" id="GO:0046330">
    <property type="term" value="P:positive regulation of JNK cascade"/>
    <property type="evidence" value="ECO:0000318"/>
    <property type="project" value="GO_Central"/>
</dbReference>
<dbReference type="GO" id="GO:0007367">
    <property type="term" value="P:segment polarity determination"/>
    <property type="evidence" value="ECO:0007669"/>
    <property type="project" value="UniProtKB-KW"/>
</dbReference>
<dbReference type="CDD" id="cd19339">
    <property type="entry name" value="Wnt_Wnt7"/>
    <property type="match status" value="1"/>
</dbReference>
<dbReference type="FunFam" id="3.30.2460.20:FF:000001">
    <property type="entry name" value="Wnt homolog"/>
    <property type="match status" value="1"/>
</dbReference>
<dbReference type="Gene3D" id="3.30.2460.20">
    <property type="match status" value="1"/>
</dbReference>
<dbReference type="InterPro" id="IPR005817">
    <property type="entry name" value="Wnt"/>
</dbReference>
<dbReference type="InterPro" id="IPR043158">
    <property type="entry name" value="Wnt_C"/>
</dbReference>
<dbReference type="InterPro" id="IPR018161">
    <property type="entry name" value="Wnt_CS"/>
</dbReference>
<dbReference type="PANTHER" id="PTHR12027:SF112">
    <property type="entry name" value="PROTEIN WNT-2"/>
    <property type="match status" value="1"/>
</dbReference>
<dbReference type="PANTHER" id="PTHR12027">
    <property type="entry name" value="WNT RELATED"/>
    <property type="match status" value="1"/>
</dbReference>
<dbReference type="Pfam" id="PF00110">
    <property type="entry name" value="wnt"/>
    <property type="match status" value="1"/>
</dbReference>
<dbReference type="PRINTS" id="PR01349">
    <property type="entry name" value="WNTPROTEIN"/>
</dbReference>
<dbReference type="SMART" id="SM00097">
    <property type="entry name" value="WNT1"/>
    <property type="match status" value="1"/>
</dbReference>
<dbReference type="PROSITE" id="PS00246">
    <property type="entry name" value="WNT1"/>
    <property type="match status" value="1"/>
</dbReference>
<accession>P28465</accession>
<accession>Q86PC8</accession>
<accession>Q9V584</accession>
<protein>
    <recommendedName>
        <fullName>Protein Wnt-2</fullName>
    </recommendedName>
    <alternativeName>
        <fullName>dWnt-2</fullName>
    </alternativeName>
</protein>
<keyword id="KW-0217">Developmental protein</keyword>
<keyword id="KW-1015">Disulfide bond</keyword>
<keyword id="KW-0272">Extracellular matrix</keyword>
<keyword id="KW-0325">Glycoprotein</keyword>
<keyword id="KW-0449">Lipoprotein</keyword>
<keyword id="KW-1185">Reference proteome</keyword>
<keyword id="KW-0964">Secreted</keyword>
<keyword id="KW-0709">Segmentation polarity protein</keyword>
<keyword id="KW-0732">Signal</keyword>
<keyword id="KW-0879">Wnt signaling pathway</keyword>
<comment type="function">
    <text evidence="5">Binds as a ligand to a family of frizzled seven-transmembrane receptors and acts through a cascade of genes on the nucleus. Segment polarity protein. May function in gonadogenesis and limb development. Wg and Wnt2 have a role in the developing trachea and together are responsible for all dorsal trunk formation.</text>
</comment>
<comment type="subcellular location">
    <subcellularLocation>
        <location>Secreted</location>
        <location>Extracellular space</location>
        <location>Extracellular matrix</location>
    </subcellularLocation>
</comment>
<comment type="tissue specificity">
    <text evidence="5 6">Dynamic expression pattern during embryogenesis. Expression is predominantly segmented, with expression also seen in the limb primordia and presumptive gonads. In embryonic tracheal cells, expression is close to and dorsal to the tracheal placode.</text>
</comment>
<comment type="PTM">
    <text evidence="1">Palmitoleoylated by porcupine. The lipid group functions as a sorting signal, targeting the ligand to polarized vesicles that transport Wnt2 to unique sites at the cell surface. Depalmitoleoylated by notum, leading to inhibit Wnt signaling pathway.</text>
</comment>
<comment type="similarity">
    <text evidence="7">Belongs to the Wnt family.</text>
</comment>
<gene>
    <name type="primary">Wnt2</name>
    <name type="synonym">Wnt-2</name>
    <name type="ORF">CG1916</name>
</gene>
<proteinExistence type="evidence at transcript level"/>
<feature type="signal peptide" evidence="4">
    <location>
        <begin position="1"/>
        <end position="23"/>
    </location>
</feature>
<feature type="chain" id="PRO_0000041477" description="Protein Wnt-2">
    <location>
        <begin position="24"/>
        <end position="352"/>
    </location>
</feature>
<feature type="lipid moiety-binding region" description="O-palmitoleoyl serine; by PORCN" evidence="3">
    <location>
        <position position="202"/>
    </location>
</feature>
<feature type="glycosylation site" description="N-linked (GlcNAc...) asparagine" evidence="4">
    <location>
        <position position="75"/>
    </location>
</feature>
<feature type="glycosylation site" description="N-linked (GlcNAc...) asparagine" evidence="4">
    <location>
        <position position="119"/>
    </location>
</feature>
<feature type="disulfide bond" evidence="2">
    <location>
        <begin position="65"/>
        <end position="76"/>
    </location>
</feature>
<feature type="disulfide bond" evidence="2">
    <location>
        <begin position="115"/>
        <end position="123"/>
    </location>
</feature>
<feature type="disulfide bond" evidence="2">
    <location>
        <begin position="125"/>
        <end position="148"/>
    </location>
</feature>
<feature type="disulfide bond" evidence="2">
    <location>
        <begin position="196"/>
        <end position="210"/>
    </location>
</feature>
<feature type="disulfide bond" evidence="2">
    <location>
        <begin position="198"/>
        <end position="205"/>
    </location>
</feature>
<feature type="disulfide bond" evidence="2">
    <location>
        <begin position="281"/>
        <end position="312"/>
    </location>
</feature>
<feature type="disulfide bond" evidence="2">
    <location>
        <begin position="297"/>
        <end position="307"/>
    </location>
</feature>
<feature type="disulfide bond" evidence="2">
    <location>
        <begin position="311"/>
        <end position="351"/>
    </location>
</feature>
<feature type="disulfide bond" evidence="2">
    <location>
        <begin position="327"/>
        <end position="342"/>
    </location>
</feature>
<feature type="disulfide bond" evidence="2">
    <location>
        <begin position="329"/>
        <end position="339"/>
    </location>
</feature>
<feature type="disulfide bond" evidence="2">
    <location>
        <begin position="334"/>
        <end position="335"/>
    </location>
</feature>
<feature type="sequence conflict" description="In Ref. 1; CAA46001." evidence="7" ref="1">
    <original>V</original>
    <variation>A</variation>
    <location>
        <position position="27"/>
    </location>
</feature>
<feature type="sequence conflict" description="In Ref. 4; AAO24959." evidence="7" ref="4">
    <original>Q</original>
    <variation>L</variation>
    <location>
        <position position="68"/>
    </location>
</feature>
<feature type="sequence conflict" description="In Ref. 1; CAA46001." evidence="7" ref="1">
    <original>A</original>
    <variation>R</variation>
    <location>
        <position position="110"/>
    </location>
</feature>
<feature type="sequence conflict" description="In Ref. 1; CAA46001." evidence="7" ref="1">
    <original>L</original>
    <variation>M</variation>
    <location>
        <position position="226"/>
    </location>
</feature>
<organism>
    <name type="scientific">Drosophila melanogaster</name>
    <name type="common">Fruit fly</name>
    <dbReference type="NCBI Taxonomy" id="7227"/>
    <lineage>
        <taxon>Eukaryota</taxon>
        <taxon>Metazoa</taxon>
        <taxon>Ecdysozoa</taxon>
        <taxon>Arthropoda</taxon>
        <taxon>Hexapoda</taxon>
        <taxon>Insecta</taxon>
        <taxon>Pterygota</taxon>
        <taxon>Neoptera</taxon>
        <taxon>Endopterygota</taxon>
        <taxon>Diptera</taxon>
        <taxon>Brachycera</taxon>
        <taxon>Muscomorpha</taxon>
        <taxon>Ephydroidea</taxon>
        <taxon>Drosophilidae</taxon>
        <taxon>Drosophila</taxon>
        <taxon>Sophophora</taxon>
    </lineage>
</organism>
<name>WNT2_DROME</name>
<reference key="1">
    <citation type="journal article" date="1992" name="Development">
        <title>Isolation and expression of two novel Wnt/wingless gene homologues in Drosophila.</title>
        <authorList>
            <person name="Russell J."/>
            <person name="Gennissen A."/>
            <person name="Nusse R."/>
        </authorList>
    </citation>
    <scope>NUCLEOTIDE SEQUENCE [MRNA]</scope>
    <scope>TISSUE SPECIFICITY</scope>
    <source>
        <strain>Canton-S</strain>
        <tissue>Embryo</tissue>
    </source>
</reference>
<reference key="2">
    <citation type="journal article" date="2000" name="Science">
        <title>The genome sequence of Drosophila melanogaster.</title>
        <authorList>
            <person name="Adams M.D."/>
            <person name="Celniker S.E."/>
            <person name="Holt R.A."/>
            <person name="Evans C.A."/>
            <person name="Gocayne J.D."/>
            <person name="Amanatides P.G."/>
            <person name="Scherer S.E."/>
            <person name="Li P.W."/>
            <person name="Hoskins R.A."/>
            <person name="Galle R.F."/>
            <person name="George R.A."/>
            <person name="Lewis S.E."/>
            <person name="Richards S."/>
            <person name="Ashburner M."/>
            <person name="Henderson S.N."/>
            <person name="Sutton G.G."/>
            <person name="Wortman J.R."/>
            <person name="Yandell M.D."/>
            <person name="Zhang Q."/>
            <person name="Chen L.X."/>
            <person name="Brandon R.C."/>
            <person name="Rogers Y.-H.C."/>
            <person name="Blazej R.G."/>
            <person name="Champe M."/>
            <person name="Pfeiffer B.D."/>
            <person name="Wan K.H."/>
            <person name="Doyle C."/>
            <person name="Baxter E.G."/>
            <person name="Helt G."/>
            <person name="Nelson C.R."/>
            <person name="Miklos G.L.G."/>
            <person name="Abril J.F."/>
            <person name="Agbayani A."/>
            <person name="An H.-J."/>
            <person name="Andrews-Pfannkoch C."/>
            <person name="Baldwin D."/>
            <person name="Ballew R.M."/>
            <person name="Basu A."/>
            <person name="Baxendale J."/>
            <person name="Bayraktaroglu L."/>
            <person name="Beasley E.M."/>
            <person name="Beeson K.Y."/>
            <person name="Benos P.V."/>
            <person name="Berman B.P."/>
            <person name="Bhandari D."/>
            <person name="Bolshakov S."/>
            <person name="Borkova D."/>
            <person name="Botchan M.R."/>
            <person name="Bouck J."/>
            <person name="Brokstein P."/>
            <person name="Brottier P."/>
            <person name="Burtis K.C."/>
            <person name="Busam D.A."/>
            <person name="Butler H."/>
            <person name="Cadieu E."/>
            <person name="Center A."/>
            <person name="Chandra I."/>
            <person name="Cherry J.M."/>
            <person name="Cawley S."/>
            <person name="Dahlke C."/>
            <person name="Davenport L.B."/>
            <person name="Davies P."/>
            <person name="de Pablos B."/>
            <person name="Delcher A."/>
            <person name="Deng Z."/>
            <person name="Mays A.D."/>
            <person name="Dew I."/>
            <person name="Dietz S.M."/>
            <person name="Dodson K."/>
            <person name="Doup L.E."/>
            <person name="Downes M."/>
            <person name="Dugan-Rocha S."/>
            <person name="Dunkov B.C."/>
            <person name="Dunn P."/>
            <person name="Durbin K.J."/>
            <person name="Evangelista C.C."/>
            <person name="Ferraz C."/>
            <person name="Ferriera S."/>
            <person name="Fleischmann W."/>
            <person name="Fosler C."/>
            <person name="Gabrielian A.E."/>
            <person name="Garg N.S."/>
            <person name="Gelbart W.M."/>
            <person name="Glasser K."/>
            <person name="Glodek A."/>
            <person name="Gong F."/>
            <person name="Gorrell J.H."/>
            <person name="Gu Z."/>
            <person name="Guan P."/>
            <person name="Harris M."/>
            <person name="Harris N.L."/>
            <person name="Harvey D.A."/>
            <person name="Heiman T.J."/>
            <person name="Hernandez J.R."/>
            <person name="Houck J."/>
            <person name="Hostin D."/>
            <person name="Houston K.A."/>
            <person name="Howland T.J."/>
            <person name="Wei M.-H."/>
            <person name="Ibegwam C."/>
            <person name="Jalali M."/>
            <person name="Kalush F."/>
            <person name="Karpen G.H."/>
            <person name="Ke Z."/>
            <person name="Kennison J.A."/>
            <person name="Ketchum K.A."/>
            <person name="Kimmel B.E."/>
            <person name="Kodira C.D."/>
            <person name="Kraft C.L."/>
            <person name="Kravitz S."/>
            <person name="Kulp D."/>
            <person name="Lai Z."/>
            <person name="Lasko P."/>
            <person name="Lei Y."/>
            <person name="Levitsky A.A."/>
            <person name="Li J.H."/>
            <person name="Li Z."/>
            <person name="Liang Y."/>
            <person name="Lin X."/>
            <person name="Liu X."/>
            <person name="Mattei B."/>
            <person name="McIntosh T.C."/>
            <person name="McLeod M.P."/>
            <person name="McPherson D."/>
            <person name="Merkulov G."/>
            <person name="Milshina N.V."/>
            <person name="Mobarry C."/>
            <person name="Morris J."/>
            <person name="Moshrefi A."/>
            <person name="Mount S.M."/>
            <person name="Moy M."/>
            <person name="Murphy B."/>
            <person name="Murphy L."/>
            <person name="Muzny D.M."/>
            <person name="Nelson D.L."/>
            <person name="Nelson D.R."/>
            <person name="Nelson K.A."/>
            <person name="Nixon K."/>
            <person name="Nusskern D.R."/>
            <person name="Pacleb J.M."/>
            <person name="Palazzolo M."/>
            <person name="Pittman G.S."/>
            <person name="Pan S."/>
            <person name="Pollard J."/>
            <person name="Puri V."/>
            <person name="Reese M.G."/>
            <person name="Reinert K."/>
            <person name="Remington K."/>
            <person name="Saunders R.D.C."/>
            <person name="Scheeler F."/>
            <person name="Shen H."/>
            <person name="Shue B.C."/>
            <person name="Siden-Kiamos I."/>
            <person name="Simpson M."/>
            <person name="Skupski M.P."/>
            <person name="Smith T.J."/>
            <person name="Spier E."/>
            <person name="Spradling A.C."/>
            <person name="Stapleton M."/>
            <person name="Strong R."/>
            <person name="Sun E."/>
            <person name="Svirskas R."/>
            <person name="Tector C."/>
            <person name="Turner R."/>
            <person name="Venter E."/>
            <person name="Wang A.H."/>
            <person name="Wang X."/>
            <person name="Wang Z.-Y."/>
            <person name="Wassarman D.A."/>
            <person name="Weinstock G.M."/>
            <person name="Weissenbach J."/>
            <person name="Williams S.M."/>
            <person name="Woodage T."/>
            <person name="Worley K.C."/>
            <person name="Wu D."/>
            <person name="Yang S."/>
            <person name="Yao Q.A."/>
            <person name="Ye J."/>
            <person name="Yeh R.-F."/>
            <person name="Zaveri J.S."/>
            <person name="Zhan M."/>
            <person name="Zhang G."/>
            <person name="Zhao Q."/>
            <person name="Zheng L."/>
            <person name="Zheng X.H."/>
            <person name="Zhong F.N."/>
            <person name="Zhong W."/>
            <person name="Zhou X."/>
            <person name="Zhu S.C."/>
            <person name="Zhu X."/>
            <person name="Smith H.O."/>
            <person name="Gibbs R.A."/>
            <person name="Myers E.W."/>
            <person name="Rubin G.M."/>
            <person name="Venter J.C."/>
        </authorList>
    </citation>
    <scope>NUCLEOTIDE SEQUENCE [LARGE SCALE GENOMIC DNA]</scope>
    <source>
        <strain>Berkeley</strain>
    </source>
</reference>
<reference key="3">
    <citation type="journal article" date="2002" name="Genome Biol.">
        <title>Annotation of the Drosophila melanogaster euchromatic genome: a systematic review.</title>
        <authorList>
            <person name="Misra S."/>
            <person name="Crosby M.A."/>
            <person name="Mungall C.J."/>
            <person name="Matthews B.B."/>
            <person name="Campbell K.S."/>
            <person name="Hradecky P."/>
            <person name="Huang Y."/>
            <person name="Kaminker J.S."/>
            <person name="Millburn G.H."/>
            <person name="Prochnik S.E."/>
            <person name="Smith C.D."/>
            <person name="Tupy J.L."/>
            <person name="Whitfield E.J."/>
            <person name="Bayraktaroglu L."/>
            <person name="Berman B.P."/>
            <person name="Bettencourt B.R."/>
            <person name="Celniker S.E."/>
            <person name="de Grey A.D.N.J."/>
            <person name="Drysdale R.A."/>
            <person name="Harris N.L."/>
            <person name="Richter J."/>
            <person name="Russo S."/>
            <person name="Schroeder A.J."/>
            <person name="Shu S.Q."/>
            <person name="Stapleton M."/>
            <person name="Yamada C."/>
            <person name="Ashburner M."/>
            <person name="Gelbart W.M."/>
            <person name="Rubin G.M."/>
            <person name="Lewis S.E."/>
        </authorList>
    </citation>
    <scope>GENOME REANNOTATION</scope>
    <source>
        <strain>Berkeley</strain>
    </source>
</reference>
<reference key="4">
    <citation type="submission" date="2003-01" db="EMBL/GenBank/DDBJ databases">
        <authorList>
            <person name="Stapleton M."/>
            <person name="Brokstein P."/>
            <person name="Hong L."/>
            <person name="Agbayani A."/>
            <person name="Carlson J.W."/>
            <person name="Champe M."/>
            <person name="Chavez C."/>
            <person name="Dorsett V."/>
            <person name="Dresnek D."/>
            <person name="Farfan D."/>
            <person name="Frise E."/>
            <person name="George R.A."/>
            <person name="Gonzalez M."/>
            <person name="Guarin H."/>
            <person name="Kronmiller B."/>
            <person name="Li P.W."/>
            <person name="Liao G."/>
            <person name="Miranda A."/>
            <person name="Mungall C.J."/>
            <person name="Nunoo J."/>
            <person name="Pacleb J.M."/>
            <person name="Paragas V."/>
            <person name="Park S."/>
            <person name="Patel S."/>
            <person name="Phouanenavong S."/>
            <person name="Wan K.H."/>
            <person name="Yu C."/>
            <person name="Lewis S.E."/>
            <person name="Rubin G.M."/>
            <person name="Celniker S.E."/>
        </authorList>
    </citation>
    <scope>NUCLEOTIDE SEQUENCE [LARGE SCALE MRNA]</scope>
    <source>
        <strain>Berkeley</strain>
        <tissue>Embryo</tissue>
    </source>
</reference>
<reference key="5">
    <citation type="journal article" date="2001" name="Proc. Natl. Acad. Sci. U.S.A.">
        <title>Seven Wnt homologues in Drosophila: a case study of the developing tracheae.</title>
        <authorList>
            <person name="Llimargas M."/>
            <person name="Lawrence P.A."/>
        </authorList>
    </citation>
    <scope>FUNCTION</scope>
    <scope>TISSUE SPECIFICITY</scope>
</reference>
<evidence type="ECO:0000250" key="1">
    <source>
        <dbReference type="UniProtKB" id="P09615"/>
    </source>
</evidence>
<evidence type="ECO:0000250" key="2">
    <source>
        <dbReference type="UniProtKB" id="P28026"/>
    </source>
</evidence>
<evidence type="ECO:0000250" key="3">
    <source>
        <dbReference type="UniProtKB" id="P56704"/>
    </source>
</evidence>
<evidence type="ECO:0000255" key="4"/>
<evidence type="ECO:0000269" key="5">
    <source>
    </source>
</evidence>
<evidence type="ECO:0000269" key="6">
    <source>
    </source>
</evidence>
<evidence type="ECO:0000305" key="7"/>
<sequence length="352" mass="39763">MWKIHNKLLIYILWIMEIRLVSSFTSVMLCGRIPGLTPGQRNMCREMPDALIALGEGHQLGAQECQHQFRGHRWNCSEVWQRNVFAHVIPTASREAAYTYAIASAGAAYAVTAACARGNISTCGCDVRHKATPTGGGTPDEPWKWGGCSADVDFGMRYARRFMDARELERDSRTLMNLHNNRAGRTLVKKMLRTDCKCHGVSGSCVMKTCWKSLPPFRLVGDRLMLKYQKAKTVQAVKGKRGLRLVLSRKKHAGTARAQKPVLDWPKRMELIYLEASPNYCERSLQTGSQGTSGRTCQRTGHGPQSCDLLCCGRGHNTQHIRRTTQCRCQFRWCCEVKCDECDESYEEFTCK</sequence>